<gene>
    <name evidence="1" type="primary">mutS2</name>
    <name type="ordered locus">PF0474</name>
</gene>
<name>MUTS2_PYRFU</name>
<dbReference type="EMBL" id="AE009950">
    <property type="protein sequence ID" value="AAL80598.1"/>
    <property type="molecule type" value="Genomic_DNA"/>
</dbReference>
<dbReference type="RefSeq" id="WP_011011591.1">
    <property type="nucleotide sequence ID" value="NZ_CP023154.1"/>
</dbReference>
<dbReference type="SMR" id="Q8U3J2"/>
<dbReference type="STRING" id="186497.PF0474"/>
<dbReference type="PaxDb" id="186497-PF0474"/>
<dbReference type="KEGG" id="pfu:PF0474"/>
<dbReference type="PATRIC" id="fig|186497.12.peg.498"/>
<dbReference type="eggNOG" id="arCOG02895">
    <property type="taxonomic scope" value="Archaea"/>
</dbReference>
<dbReference type="HOGENOM" id="CLU_026764_0_0_2"/>
<dbReference type="OrthoDB" id="15514at2157"/>
<dbReference type="PhylomeDB" id="Q8U3J2"/>
<dbReference type="Proteomes" id="UP000001013">
    <property type="component" value="Chromosome"/>
</dbReference>
<dbReference type="GO" id="GO:0005524">
    <property type="term" value="F:ATP binding"/>
    <property type="evidence" value="ECO:0007669"/>
    <property type="project" value="UniProtKB-UniRule"/>
</dbReference>
<dbReference type="GO" id="GO:0140664">
    <property type="term" value="F:ATP-dependent DNA damage sensor activity"/>
    <property type="evidence" value="ECO:0007669"/>
    <property type="project" value="InterPro"/>
</dbReference>
<dbReference type="GO" id="GO:0016787">
    <property type="term" value="F:hydrolase activity"/>
    <property type="evidence" value="ECO:0007669"/>
    <property type="project" value="UniProtKB-KW"/>
</dbReference>
<dbReference type="GO" id="GO:0030983">
    <property type="term" value="F:mismatched DNA binding"/>
    <property type="evidence" value="ECO:0007669"/>
    <property type="project" value="InterPro"/>
</dbReference>
<dbReference type="GO" id="GO:0006298">
    <property type="term" value="P:mismatch repair"/>
    <property type="evidence" value="ECO:0007669"/>
    <property type="project" value="InterPro"/>
</dbReference>
<dbReference type="FunFam" id="3.40.50.300:FF:002865">
    <property type="entry name" value="DNA-binding protein MutS2"/>
    <property type="match status" value="1"/>
</dbReference>
<dbReference type="Gene3D" id="3.40.50.300">
    <property type="entry name" value="P-loop containing nucleotide triphosphate hydrolases"/>
    <property type="match status" value="1"/>
</dbReference>
<dbReference type="HAMAP" id="MF_00971">
    <property type="entry name" value="MutS2_archaea"/>
    <property type="match status" value="1"/>
</dbReference>
<dbReference type="InterPro" id="IPR012401">
    <property type="entry name" value="DNA-bd_MutS2_arc"/>
</dbReference>
<dbReference type="InterPro" id="IPR000432">
    <property type="entry name" value="DNA_mismatch_repair_MutS_C"/>
</dbReference>
<dbReference type="InterPro" id="IPR045076">
    <property type="entry name" value="MutS"/>
</dbReference>
<dbReference type="InterPro" id="IPR027417">
    <property type="entry name" value="P-loop_NTPase"/>
</dbReference>
<dbReference type="PANTHER" id="PTHR11361">
    <property type="entry name" value="DNA MISMATCH REPAIR PROTEIN MUTS FAMILY MEMBER"/>
    <property type="match status" value="1"/>
</dbReference>
<dbReference type="PANTHER" id="PTHR11361:SF125">
    <property type="entry name" value="DNA-BINDING PROTEIN MUTS2"/>
    <property type="match status" value="1"/>
</dbReference>
<dbReference type="Pfam" id="PF00488">
    <property type="entry name" value="MutS_V"/>
    <property type="match status" value="1"/>
</dbReference>
<dbReference type="PIRSF" id="PIRSF029254">
    <property type="entry name" value="MutS_C_archaeal"/>
    <property type="match status" value="1"/>
</dbReference>
<dbReference type="SMART" id="SM00534">
    <property type="entry name" value="MUTSac"/>
    <property type="match status" value="1"/>
</dbReference>
<dbReference type="SUPFAM" id="SSF52540">
    <property type="entry name" value="P-loop containing nucleoside triphosphate hydrolases"/>
    <property type="match status" value="1"/>
</dbReference>
<protein>
    <recommendedName>
        <fullName evidence="1">DNA-binding protein MutS2</fullName>
    </recommendedName>
</protein>
<comment type="function">
    <text evidence="1 2">Has ATPase and non-specific DNA-binding activities. May be involved in recombination and/or recombinational repair. Not involved in mismatch repair.</text>
</comment>
<comment type="cofactor">
    <cofactor evidence="1 2">
        <name>Co(2+)</name>
        <dbReference type="ChEBI" id="CHEBI:48828"/>
    </cofactor>
    <cofactor evidence="1 2">
        <name>Mn(2+)</name>
        <dbReference type="ChEBI" id="CHEBI:29035"/>
    </cofactor>
    <text evidence="1 2">Divalent metal cation. Highest activity with cobalt or manganese.</text>
</comment>
<comment type="biophysicochemical properties">
    <temperatureDependence>
        <text evidence="2">Optimum temperature is 90 degrees Celsius for ATPase and DNA-binding activities.</text>
    </temperatureDependence>
</comment>
<comment type="subunit">
    <text evidence="2">Multimer.</text>
</comment>
<comment type="similarity">
    <text evidence="1">Belongs to the DNA mismatch repair MutS family. Archaeal Muts2 subfamily.</text>
</comment>
<reference key="1">
    <citation type="journal article" date="1999" name="Genetics">
        <title>Divergence of the hyperthermophilic archaea Pyrococcus furiosus and P. horikoshii inferred from complete genomic sequences.</title>
        <authorList>
            <person name="Maeder D.L."/>
            <person name="Weiss R.B."/>
            <person name="Dunn D.M."/>
            <person name="Cherry J.L."/>
            <person name="Gonzalez J.M."/>
            <person name="DiRuggiero J."/>
            <person name="Robb F.T."/>
        </authorList>
    </citation>
    <scope>NUCLEOTIDE SEQUENCE [LARGE SCALE GENOMIC DNA]</scope>
    <source>
        <strain>ATCC 43587 / DSM 3638 / JCM 8422 / Vc1</strain>
    </source>
</reference>
<reference key="2">
    <citation type="journal article" date="2002" name="Curr. Microbiol.">
        <title>MutS2 family protein from Pyrococcus furiosus.</title>
        <authorList>
            <person name="Vijayvargia R."/>
            <person name="Biswas I."/>
        </authorList>
    </citation>
    <scope>FUNCTION</scope>
    <scope>ATPASE ACTIVITY</scope>
    <scope>DNA-BINDING</scope>
    <scope>COFACTOR</scope>
    <scope>BIOPHYSICOCHEMICAL PROPERTIES</scope>
    <scope>SUBUNIT</scope>
</reference>
<keyword id="KW-0067">ATP-binding</keyword>
<keyword id="KW-0238">DNA-binding</keyword>
<keyword id="KW-0378">Hydrolase</keyword>
<keyword id="KW-0547">Nucleotide-binding</keyword>
<keyword id="KW-1185">Reference proteome</keyword>
<feature type="chain" id="PRO_0000423826" description="DNA-binding protein MutS2">
    <location>
        <begin position="1"/>
        <end position="562"/>
    </location>
</feature>
<feature type="binding site" evidence="1">
    <location>
        <begin position="380"/>
        <end position="387"/>
    </location>
    <ligand>
        <name>ATP</name>
        <dbReference type="ChEBI" id="CHEBI:30616"/>
    </ligand>
</feature>
<sequence>MKLRGDAREVYKRLLSRLESMIKLGEARTFLKKFEPTSDREEIIKRQNYLKEGLKNVRDDLEEYLLSIRPIRFRREFFHDRILLVSDEEVEEAEKLDLCPVTSDPSEIEDYPLILSTIGYGIEVEVKPSHIAPELYIIPLWENRDVLEALSKVFPGGAADKILISLKEIEEIFKKMEILENLDEIIVEKEKELNRKIEEKLERFKLTLSGRDLVEFMKALRAGNLEYLFHKFSALNDEIIEEINKAEKEISDVLGISVEIFPRDFPVEVPPEQIEALKRELEREFKIEFYLKSRETVEKILPHLQKLKEEIQKAYELYFLLVVKKFTRDFVFPEIVEEGIGFIEGRNLFIENPQPVSYFVGKSYGNFPGVEEANIVILTGANSGGKTSLLELISQIVILAHMGFPVPAKKAWFTVLDEIFFFKRKRSVYGAGAFETSLKGLVRAIKGKGKKLILIDEFESITEPGAAAKILAELLKIAYEKGFFVVIVSHLGEDLKREIPFARVDGIEAKGLDENLNLIVDRQPKFGVIGRSTPELIVERLARKGRGEEKMIMNRILKKFRK</sequence>
<proteinExistence type="evidence at protein level"/>
<accession>Q8U3J2</accession>
<evidence type="ECO:0000255" key="1">
    <source>
        <dbReference type="HAMAP-Rule" id="MF_00971"/>
    </source>
</evidence>
<evidence type="ECO:0000269" key="2">
    <source>
    </source>
</evidence>
<organism>
    <name type="scientific">Pyrococcus furiosus (strain ATCC 43587 / DSM 3638 / JCM 8422 / Vc1)</name>
    <dbReference type="NCBI Taxonomy" id="186497"/>
    <lineage>
        <taxon>Archaea</taxon>
        <taxon>Methanobacteriati</taxon>
        <taxon>Methanobacteriota</taxon>
        <taxon>Thermococci</taxon>
        <taxon>Thermococcales</taxon>
        <taxon>Thermococcaceae</taxon>
        <taxon>Pyrococcus</taxon>
    </lineage>
</organism>